<dbReference type="EMBL" id="DS480442">
    <property type="protein sequence ID" value="EDO15844.1"/>
    <property type="molecule type" value="Genomic_DNA"/>
</dbReference>
<dbReference type="RefSeq" id="XP_001643702.1">
    <property type="nucleotide sequence ID" value="XM_001643652.1"/>
</dbReference>
<dbReference type="SMR" id="A7TPF8"/>
<dbReference type="FunCoup" id="A7TPF8">
    <property type="interactions" value="121"/>
</dbReference>
<dbReference type="STRING" id="436907.A7TPF8"/>
<dbReference type="GeneID" id="5543955"/>
<dbReference type="KEGG" id="vpo:Kpol_507p6"/>
<dbReference type="eggNOG" id="ENOG502S02Z">
    <property type="taxonomic scope" value="Eukaryota"/>
</dbReference>
<dbReference type="HOGENOM" id="CLU_385036_0_0_1"/>
<dbReference type="InParanoid" id="A7TPF8"/>
<dbReference type="OMA" id="NTSMIPH"/>
<dbReference type="OrthoDB" id="4069286at2759"/>
<dbReference type="PhylomeDB" id="A7TPF8"/>
<dbReference type="Proteomes" id="UP000000267">
    <property type="component" value="Unassembled WGS sequence"/>
</dbReference>
<dbReference type="GO" id="GO:0005694">
    <property type="term" value="C:chromosome"/>
    <property type="evidence" value="ECO:0007669"/>
    <property type="project" value="UniProtKB-SubCell"/>
</dbReference>
<dbReference type="GO" id="GO:0005634">
    <property type="term" value="C:nucleus"/>
    <property type="evidence" value="ECO:0007669"/>
    <property type="project" value="UniProtKB-SubCell"/>
</dbReference>
<dbReference type="GO" id="GO:0003677">
    <property type="term" value="F:DNA binding"/>
    <property type="evidence" value="ECO:0007669"/>
    <property type="project" value="UniProtKB-KW"/>
</dbReference>
<dbReference type="GO" id="GO:0000166">
    <property type="term" value="F:nucleotide binding"/>
    <property type="evidence" value="ECO:0007669"/>
    <property type="project" value="UniProtKB-KW"/>
</dbReference>
<dbReference type="GO" id="GO:0007059">
    <property type="term" value="P:chromosome segregation"/>
    <property type="evidence" value="ECO:0007669"/>
    <property type="project" value="UniProtKB-KW"/>
</dbReference>
<dbReference type="GO" id="GO:0051321">
    <property type="term" value="P:meiotic cell cycle"/>
    <property type="evidence" value="ECO:0007669"/>
    <property type="project" value="UniProtKB-KW"/>
</dbReference>
<dbReference type="Gene3D" id="3.40.50.10130">
    <property type="match status" value="1"/>
</dbReference>
<feature type="chain" id="PRO_0000333501" description="Protein ZIP2">
    <location>
        <begin position="1"/>
        <end position="718"/>
    </location>
</feature>
<evidence type="ECO:0000250" key="1"/>
<evidence type="ECO:0000305" key="2"/>
<comment type="function">
    <text evidence="1">Required for initiation of meiotic chromosome synapsis. Involved in synaptonemal complex formation, a structure that tethers a pair of homologous chromosomes along their lengths and plays a central role in recombination and homolog segregation during meiosis (By similarity).</text>
</comment>
<comment type="subcellular location">
    <subcellularLocation>
        <location evidence="1">Nucleus</location>
    </subcellularLocation>
    <subcellularLocation>
        <location evidence="1">Chromosome</location>
    </subcellularLocation>
    <text evidence="1">Localizes to a meiosis specific chromosomal structure called the synaptonemal complex (SC) formed during meiotic prophase.</text>
</comment>
<comment type="similarity">
    <text evidence="2">Belongs to the ZIP2 family.</text>
</comment>
<keyword id="KW-0131">Cell cycle</keyword>
<keyword id="KW-0160">Chromosomal rearrangement</keyword>
<keyword id="KW-0158">Chromosome</keyword>
<keyword id="KW-0159">Chromosome partition</keyword>
<keyword id="KW-0238">DNA-binding</keyword>
<keyword id="KW-0469">Meiosis</keyword>
<keyword id="KW-0547">Nucleotide-binding</keyword>
<keyword id="KW-0539">Nucleus</keyword>
<keyword id="KW-1185">Reference proteome</keyword>
<accession>A7TPF8</accession>
<organism>
    <name type="scientific">Vanderwaltozyma polyspora (strain ATCC 22028 / DSM 70294 / BCRC 21397 / CBS 2163 / NBRC 10782 / NRRL Y-8283 / UCD 57-17)</name>
    <name type="common">Kluyveromyces polysporus</name>
    <dbReference type="NCBI Taxonomy" id="436907"/>
    <lineage>
        <taxon>Eukaryota</taxon>
        <taxon>Fungi</taxon>
        <taxon>Dikarya</taxon>
        <taxon>Ascomycota</taxon>
        <taxon>Saccharomycotina</taxon>
        <taxon>Saccharomycetes</taxon>
        <taxon>Saccharomycetales</taxon>
        <taxon>Saccharomycetaceae</taxon>
        <taxon>Vanderwaltozyma</taxon>
    </lineage>
</organism>
<protein>
    <recommendedName>
        <fullName>Protein ZIP2</fullName>
    </recommendedName>
    <alternativeName>
        <fullName>Zipping up meiotic chromosomes protein 2</fullName>
    </alternativeName>
</protein>
<name>ZIP2_VANPO</name>
<proteinExistence type="inferred from homology"/>
<sequence>MTDFSNWSCEYHTTFDEIVRIENKFKEHLKVDKRTRRRLLECCSKDFEILKFKGLHGIPCYQIEKINVNIEIISLNGLNTNNNGRLTEKWNPDRIGNFDFASYNKREKLLIDKETKVLLSWISGLKLENEDIMEFPNPLIKINSEFNSYIIETCNFCYLTKELLVYSPKSSLDELMPNDLNKNFEKLENEKIIQCELNFNQHYSSEILPFLEFKPYRTILFLNNFLIEVNMNGISSQNIPEKTKREFINWNYENQSEINTSWDINLWSKVFDEDYNEIEFLKLKTPNEIITEDVIENFKSYNSKRFKVYWKLDKNETKKLEWNPIKSYISKNLTTKILLNEKLTKQNEYTIKKPELNFKKILYNIIDLIDIENGTFGSLNLVLNNKIENSFQDPLTKNDESSSINVEKEISESTLQINTSMIPHKRSYIDEELKSILEIKRKKKNLNDRNLKDSEDKTGSILSFINQGIITNIPRDTVLSDRQIVSDQTITESNQLPKFGLKIKFNCKEIAGKTVILNGKKIRENHKIKNILENKSQIKILEKELSYDCDFILNATTCLVRIKLDNFFQISKNGYLFYQKKLMDLTTEFKRVLVLVEYSSIIESTDKDIFWKLHLYLKNYQFYTYIIPSNIEEIARKISLLISRYSSKYNDNELDCNSSEEQILQSLNFNIFLVKDILKKFTLFDFLKGLTLNCDNRNQNILTKQQLARIKTLLTLEW</sequence>
<reference key="1">
    <citation type="journal article" date="2007" name="Proc. Natl. Acad. Sci. U.S.A.">
        <title>Independent sorting-out of thousands of duplicated gene pairs in two yeast species descended from a whole-genome duplication.</title>
        <authorList>
            <person name="Scannell D.R."/>
            <person name="Frank A.C."/>
            <person name="Conant G.C."/>
            <person name="Byrne K.P."/>
            <person name="Woolfit M."/>
            <person name="Wolfe K.H."/>
        </authorList>
    </citation>
    <scope>NUCLEOTIDE SEQUENCE [LARGE SCALE GENOMIC DNA]</scope>
    <source>
        <strain>ATCC 22028 / DSM 70294 / BCRC 21397 / CBS 2163 / NBRC 10782 / NRRL Y-8283 / UCD 57-17</strain>
    </source>
</reference>
<gene>
    <name type="primary">ZIP2</name>
    <name type="ORF">Kpol_507p6</name>
</gene>